<organism>
    <name type="scientific">Francisella tularensis subsp. tularensis (strain WY96-3418)</name>
    <dbReference type="NCBI Taxonomy" id="418136"/>
    <lineage>
        <taxon>Bacteria</taxon>
        <taxon>Pseudomonadati</taxon>
        <taxon>Pseudomonadota</taxon>
        <taxon>Gammaproteobacteria</taxon>
        <taxon>Thiotrichales</taxon>
        <taxon>Francisellaceae</taxon>
        <taxon>Francisella</taxon>
    </lineage>
</organism>
<feature type="chain" id="PRO_0000331830" description="Methionine--tRNA ligase">
    <location>
        <begin position="1"/>
        <end position="674"/>
    </location>
</feature>
<feature type="domain" description="tRNA-binding" evidence="1">
    <location>
        <begin position="574"/>
        <end position="674"/>
    </location>
</feature>
<feature type="short sequence motif" description="'HIGH' region">
    <location>
        <begin position="11"/>
        <end position="21"/>
    </location>
</feature>
<feature type="short sequence motif" description="'KMSKS' region">
    <location>
        <begin position="330"/>
        <end position="334"/>
    </location>
</feature>
<feature type="binding site" evidence="1">
    <location>
        <position position="142"/>
    </location>
    <ligand>
        <name>Zn(2+)</name>
        <dbReference type="ChEBI" id="CHEBI:29105"/>
    </ligand>
</feature>
<feature type="binding site" evidence="1">
    <location>
        <position position="145"/>
    </location>
    <ligand>
        <name>Zn(2+)</name>
        <dbReference type="ChEBI" id="CHEBI:29105"/>
    </ligand>
</feature>
<feature type="binding site" evidence="1">
    <location>
        <position position="155"/>
    </location>
    <ligand>
        <name>Zn(2+)</name>
        <dbReference type="ChEBI" id="CHEBI:29105"/>
    </ligand>
</feature>
<feature type="binding site" evidence="1">
    <location>
        <position position="158"/>
    </location>
    <ligand>
        <name>Zn(2+)</name>
        <dbReference type="ChEBI" id="CHEBI:29105"/>
    </ligand>
</feature>
<feature type="binding site" evidence="1">
    <location>
        <position position="333"/>
    </location>
    <ligand>
        <name>ATP</name>
        <dbReference type="ChEBI" id="CHEBI:30616"/>
    </ligand>
</feature>
<accession>A4IXI6</accession>
<comment type="function">
    <text evidence="1">Is required not only for elongation of protein synthesis but also for the initiation of all mRNA translation through initiator tRNA(fMet) aminoacylation.</text>
</comment>
<comment type="catalytic activity">
    <reaction evidence="1">
        <text>tRNA(Met) + L-methionine + ATP = L-methionyl-tRNA(Met) + AMP + diphosphate</text>
        <dbReference type="Rhea" id="RHEA:13481"/>
        <dbReference type="Rhea" id="RHEA-COMP:9667"/>
        <dbReference type="Rhea" id="RHEA-COMP:9698"/>
        <dbReference type="ChEBI" id="CHEBI:30616"/>
        <dbReference type="ChEBI" id="CHEBI:33019"/>
        <dbReference type="ChEBI" id="CHEBI:57844"/>
        <dbReference type="ChEBI" id="CHEBI:78442"/>
        <dbReference type="ChEBI" id="CHEBI:78530"/>
        <dbReference type="ChEBI" id="CHEBI:456215"/>
        <dbReference type="EC" id="6.1.1.10"/>
    </reaction>
</comment>
<comment type="cofactor">
    <cofactor evidence="1">
        <name>Zn(2+)</name>
        <dbReference type="ChEBI" id="CHEBI:29105"/>
    </cofactor>
    <text evidence="1">Binds 1 zinc ion per subunit.</text>
</comment>
<comment type="subunit">
    <text evidence="1">Homodimer.</text>
</comment>
<comment type="subcellular location">
    <subcellularLocation>
        <location evidence="1">Cytoplasm</location>
    </subcellularLocation>
</comment>
<comment type="similarity">
    <text evidence="1">Belongs to the class-I aminoacyl-tRNA synthetase family. MetG type 1 subfamily.</text>
</comment>
<sequence length="674" mass="76585">MRKILVTNALPYANGDLHLGHMLGYIQSDIWVRFQKLQGNQCIFVCGSDTHGTPIMLKAKSLGITPEELVTKYSNRHLQDFTDFEINFDNYHSTHNSLNKEIVEDIYNKLNNKNLISKKAIAQAYDPEAKMFLPDRFVKGTCPKCKAEDQYGDSCEVCGATYDPTELINPRSVISGQSPIQKNSEHFFFDLPALEKNIKDWIESNTLLQPEVANKLAEWFEQGLQSWDISRDAPYFGFAIPGTNEQKFFYVWLDAPMGYIASFKDYCNKNNINFGDFWGDSSSESELYHFIGKDIIYFHTLFWPAILSSTGYKTPTSVFANGFLTVNGKKMSKSRGTFIQARTYLDNLEPSYLRYYFASRLTSRIDDIDLNLEEFVTKSNSDIVGKVVNIASRCAGFIYKKFDATLSGEIFDPELESEFSKNHDAITQAFEKREFAHAVRLIMALADKANQFIDYHKPWQLAKEEGQEQKVHQVCSQGINMFKVLIVYLKPIIPSIVAEAERFLNIQFISWADAPKFLINHKIDKFKPLATRIEKEKVDKILEDTKKMLENEQAPQSKKEEPKLDIAAECTFDDFMKVDLRIAKITEASHVEGADKLLKLILDLGGVTKQVFAGIKSAYKPEDLIGKHTIMVANLAPRKMKFGMSEGMVLAAGDGKGIYILEPHEGAQPGMRVK</sequence>
<keyword id="KW-0030">Aminoacyl-tRNA synthetase</keyword>
<keyword id="KW-0067">ATP-binding</keyword>
<keyword id="KW-0963">Cytoplasm</keyword>
<keyword id="KW-0436">Ligase</keyword>
<keyword id="KW-0479">Metal-binding</keyword>
<keyword id="KW-0547">Nucleotide-binding</keyword>
<keyword id="KW-0648">Protein biosynthesis</keyword>
<keyword id="KW-0694">RNA-binding</keyword>
<keyword id="KW-0820">tRNA-binding</keyword>
<keyword id="KW-0862">Zinc</keyword>
<evidence type="ECO:0000255" key="1">
    <source>
        <dbReference type="HAMAP-Rule" id="MF_00098"/>
    </source>
</evidence>
<dbReference type="EC" id="6.1.1.10" evidence="1"/>
<dbReference type="EMBL" id="CP000608">
    <property type="protein sequence ID" value="ABO46638.1"/>
    <property type="molecule type" value="Genomic_DNA"/>
</dbReference>
<dbReference type="RefSeq" id="WP_003025867.1">
    <property type="nucleotide sequence ID" value="NC_009257.1"/>
</dbReference>
<dbReference type="SMR" id="A4IXI6"/>
<dbReference type="KEGG" id="ftw:FTW_0758"/>
<dbReference type="HOGENOM" id="CLU_009710_7_0_6"/>
<dbReference type="GO" id="GO:0005829">
    <property type="term" value="C:cytosol"/>
    <property type="evidence" value="ECO:0007669"/>
    <property type="project" value="TreeGrafter"/>
</dbReference>
<dbReference type="GO" id="GO:0005524">
    <property type="term" value="F:ATP binding"/>
    <property type="evidence" value="ECO:0007669"/>
    <property type="project" value="UniProtKB-UniRule"/>
</dbReference>
<dbReference type="GO" id="GO:0046872">
    <property type="term" value="F:metal ion binding"/>
    <property type="evidence" value="ECO:0007669"/>
    <property type="project" value="UniProtKB-KW"/>
</dbReference>
<dbReference type="GO" id="GO:0004825">
    <property type="term" value="F:methionine-tRNA ligase activity"/>
    <property type="evidence" value="ECO:0007669"/>
    <property type="project" value="UniProtKB-UniRule"/>
</dbReference>
<dbReference type="GO" id="GO:0000049">
    <property type="term" value="F:tRNA binding"/>
    <property type="evidence" value="ECO:0007669"/>
    <property type="project" value="UniProtKB-KW"/>
</dbReference>
<dbReference type="GO" id="GO:0006431">
    <property type="term" value="P:methionyl-tRNA aminoacylation"/>
    <property type="evidence" value="ECO:0007669"/>
    <property type="project" value="UniProtKB-UniRule"/>
</dbReference>
<dbReference type="CDD" id="cd07957">
    <property type="entry name" value="Anticodon_Ia_Met"/>
    <property type="match status" value="1"/>
</dbReference>
<dbReference type="CDD" id="cd00814">
    <property type="entry name" value="MetRS_core"/>
    <property type="match status" value="1"/>
</dbReference>
<dbReference type="CDD" id="cd02800">
    <property type="entry name" value="tRNA_bind_EcMetRS_like"/>
    <property type="match status" value="1"/>
</dbReference>
<dbReference type="FunFam" id="1.10.730.10:FF:000005">
    <property type="entry name" value="Methionine--tRNA ligase"/>
    <property type="match status" value="1"/>
</dbReference>
<dbReference type="FunFam" id="2.20.28.20:FF:000001">
    <property type="entry name" value="Methionine--tRNA ligase"/>
    <property type="match status" value="1"/>
</dbReference>
<dbReference type="FunFam" id="2.40.50.140:FF:000042">
    <property type="entry name" value="Methionine--tRNA ligase"/>
    <property type="match status" value="1"/>
</dbReference>
<dbReference type="Gene3D" id="3.40.50.620">
    <property type="entry name" value="HUPs"/>
    <property type="match status" value="1"/>
</dbReference>
<dbReference type="Gene3D" id="1.10.730.10">
    <property type="entry name" value="Isoleucyl-tRNA Synthetase, Domain 1"/>
    <property type="match status" value="1"/>
</dbReference>
<dbReference type="Gene3D" id="2.20.28.20">
    <property type="entry name" value="Methionyl-tRNA synthetase, Zn-domain"/>
    <property type="match status" value="1"/>
</dbReference>
<dbReference type="Gene3D" id="2.40.50.140">
    <property type="entry name" value="Nucleic acid-binding proteins"/>
    <property type="match status" value="1"/>
</dbReference>
<dbReference type="HAMAP" id="MF_00098">
    <property type="entry name" value="Met_tRNA_synth_type1"/>
    <property type="match status" value="1"/>
</dbReference>
<dbReference type="InterPro" id="IPR001412">
    <property type="entry name" value="aa-tRNA-synth_I_CS"/>
</dbReference>
<dbReference type="InterPro" id="IPR041872">
    <property type="entry name" value="Anticodon_Met"/>
</dbReference>
<dbReference type="InterPro" id="IPR004495">
    <property type="entry name" value="Met-tRNA-synth_bsu_C"/>
</dbReference>
<dbReference type="InterPro" id="IPR023458">
    <property type="entry name" value="Met-tRNA_ligase_1"/>
</dbReference>
<dbReference type="InterPro" id="IPR014758">
    <property type="entry name" value="Met-tRNA_synth"/>
</dbReference>
<dbReference type="InterPro" id="IPR015413">
    <property type="entry name" value="Methionyl/Leucyl_tRNA_Synth"/>
</dbReference>
<dbReference type="InterPro" id="IPR033911">
    <property type="entry name" value="MetRS_core"/>
</dbReference>
<dbReference type="InterPro" id="IPR029038">
    <property type="entry name" value="MetRS_Zn"/>
</dbReference>
<dbReference type="InterPro" id="IPR012340">
    <property type="entry name" value="NA-bd_OB-fold"/>
</dbReference>
<dbReference type="InterPro" id="IPR014729">
    <property type="entry name" value="Rossmann-like_a/b/a_fold"/>
</dbReference>
<dbReference type="InterPro" id="IPR002547">
    <property type="entry name" value="tRNA-bd_dom"/>
</dbReference>
<dbReference type="InterPro" id="IPR009080">
    <property type="entry name" value="tRNAsynth_Ia_anticodon-bd"/>
</dbReference>
<dbReference type="NCBIfam" id="TIGR00398">
    <property type="entry name" value="metG"/>
    <property type="match status" value="1"/>
</dbReference>
<dbReference type="NCBIfam" id="TIGR00399">
    <property type="entry name" value="metG_C_term"/>
    <property type="match status" value="1"/>
</dbReference>
<dbReference type="NCBIfam" id="NF001100">
    <property type="entry name" value="PRK00133.1"/>
    <property type="match status" value="1"/>
</dbReference>
<dbReference type="PANTHER" id="PTHR45765">
    <property type="entry name" value="METHIONINE--TRNA LIGASE"/>
    <property type="match status" value="1"/>
</dbReference>
<dbReference type="PANTHER" id="PTHR45765:SF1">
    <property type="entry name" value="METHIONINE--TRNA LIGASE, CYTOPLASMIC"/>
    <property type="match status" value="1"/>
</dbReference>
<dbReference type="Pfam" id="PF19303">
    <property type="entry name" value="Anticodon_3"/>
    <property type="match status" value="1"/>
</dbReference>
<dbReference type="Pfam" id="PF09334">
    <property type="entry name" value="tRNA-synt_1g"/>
    <property type="match status" value="1"/>
</dbReference>
<dbReference type="Pfam" id="PF01588">
    <property type="entry name" value="tRNA_bind"/>
    <property type="match status" value="1"/>
</dbReference>
<dbReference type="PRINTS" id="PR01041">
    <property type="entry name" value="TRNASYNTHMET"/>
</dbReference>
<dbReference type="SUPFAM" id="SSF47323">
    <property type="entry name" value="Anticodon-binding domain of a subclass of class I aminoacyl-tRNA synthetases"/>
    <property type="match status" value="1"/>
</dbReference>
<dbReference type="SUPFAM" id="SSF57770">
    <property type="entry name" value="Methionyl-tRNA synthetase (MetRS), Zn-domain"/>
    <property type="match status" value="1"/>
</dbReference>
<dbReference type="SUPFAM" id="SSF50249">
    <property type="entry name" value="Nucleic acid-binding proteins"/>
    <property type="match status" value="1"/>
</dbReference>
<dbReference type="SUPFAM" id="SSF52374">
    <property type="entry name" value="Nucleotidylyl transferase"/>
    <property type="match status" value="1"/>
</dbReference>
<dbReference type="PROSITE" id="PS00178">
    <property type="entry name" value="AA_TRNA_LIGASE_I"/>
    <property type="match status" value="1"/>
</dbReference>
<dbReference type="PROSITE" id="PS50886">
    <property type="entry name" value="TRBD"/>
    <property type="match status" value="1"/>
</dbReference>
<reference key="1">
    <citation type="journal article" date="2007" name="PLoS ONE">
        <title>Complete genomic characterization of a pathogenic A.II strain of Francisella tularensis subspecies tularensis.</title>
        <authorList>
            <person name="Beckstrom-Sternberg S.M."/>
            <person name="Auerbach R.K."/>
            <person name="Godbole S."/>
            <person name="Pearson J.V."/>
            <person name="Beckstrom-Sternberg J.S."/>
            <person name="Deng Z."/>
            <person name="Munk C."/>
            <person name="Kubota K."/>
            <person name="Zhou Y."/>
            <person name="Bruce D."/>
            <person name="Noronha J."/>
            <person name="Scheuermann R.H."/>
            <person name="Wang A."/>
            <person name="Wei X."/>
            <person name="Wang J."/>
            <person name="Hao J."/>
            <person name="Wagner D.M."/>
            <person name="Brettin T.S."/>
            <person name="Brown N."/>
            <person name="Gilna P."/>
            <person name="Keim P.S."/>
        </authorList>
    </citation>
    <scope>NUCLEOTIDE SEQUENCE [LARGE SCALE GENOMIC DNA]</scope>
    <source>
        <strain>WY96-3418</strain>
    </source>
</reference>
<name>SYM_FRATW</name>
<proteinExistence type="inferred from homology"/>
<protein>
    <recommendedName>
        <fullName evidence="1">Methionine--tRNA ligase</fullName>
        <ecNumber evidence="1">6.1.1.10</ecNumber>
    </recommendedName>
    <alternativeName>
        <fullName evidence="1">Methionyl-tRNA synthetase</fullName>
        <shortName evidence="1">MetRS</shortName>
    </alternativeName>
</protein>
<gene>
    <name evidence="1" type="primary">metG</name>
    <name type="ordered locus">FTW_0758</name>
</gene>